<organism>
    <name type="scientific">Burkholderia orbicola (strain AU 1054)</name>
    <dbReference type="NCBI Taxonomy" id="331271"/>
    <lineage>
        <taxon>Bacteria</taxon>
        <taxon>Pseudomonadati</taxon>
        <taxon>Pseudomonadota</taxon>
        <taxon>Betaproteobacteria</taxon>
        <taxon>Burkholderiales</taxon>
        <taxon>Burkholderiaceae</taxon>
        <taxon>Burkholderia</taxon>
        <taxon>Burkholderia cepacia complex</taxon>
        <taxon>Burkholderia orbicola</taxon>
    </lineage>
</organism>
<sequence length="337" mass="37126">MSIARRTTLSKFLIEQQRETNNLPADLRLLIEVVARACKAISYNVSKGALGDALGTAGSENVQGEVQKKLDILSNEILLDANEWGGNLAAMASEEMETFFPIPANYPRGEYLLVFDPLDGSSNIDVNVSIGTIFSVLRCPDGKQATEESFLQPGTEQVAAGYAVYGPQTVFVLTTGNGVNCFTLDREVGSWVLTQSNMQIPADTREYAINASNARHWYDPVKRYVDELNAGKDGPRGDNFNMRWIASMVADVHRILNRGGIFMYPADKRTPDRPGKLRLMYEANPMSFIVEQAGGAATTGTQRIMEVQPTGLHQRVPVFLGSKNEVKRVTGYHDEAK</sequence>
<name>F16PA_BURO1</name>
<comment type="catalytic activity">
    <reaction evidence="1">
        <text>beta-D-fructose 1,6-bisphosphate + H2O = beta-D-fructose 6-phosphate + phosphate</text>
        <dbReference type="Rhea" id="RHEA:11064"/>
        <dbReference type="ChEBI" id="CHEBI:15377"/>
        <dbReference type="ChEBI" id="CHEBI:32966"/>
        <dbReference type="ChEBI" id="CHEBI:43474"/>
        <dbReference type="ChEBI" id="CHEBI:57634"/>
        <dbReference type="EC" id="3.1.3.11"/>
    </reaction>
</comment>
<comment type="cofactor">
    <cofactor evidence="1">
        <name>Mg(2+)</name>
        <dbReference type="ChEBI" id="CHEBI:18420"/>
    </cofactor>
    <text evidence="1">Binds 2 magnesium ions per subunit.</text>
</comment>
<comment type="pathway">
    <text evidence="1">Carbohydrate biosynthesis; gluconeogenesis.</text>
</comment>
<comment type="subunit">
    <text evidence="1">Homotetramer.</text>
</comment>
<comment type="subcellular location">
    <subcellularLocation>
        <location evidence="1">Cytoplasm</location>
    </subcellularLocation>
</comment>
<comment type="similarity">
    <text evidence="1">Belongs to the FBPase class 1 family.</text>
</comment>
<keyword id="KW-0119">Carbohydrate metabolism</keyword>
<keyword id="KW-0963">Cytoplasm</keyword>
<keyword id="KW-0378">Hydrolase</keyword>
<keyword id="KW-0460">Magnesium</keyword>
<keyword id="KW-0479">Metal-binding</keyword>
<proteinExistence type="inferred from homology"/>
<protein>
    <recommendedName>
        <fullName evidence="1">Fructose-1,6-bisphosphatase class 1</fullName>
        <shortName evidence="1">FBPase class 1</shortName>
        <ecNumber evidence="1">3.1.3.11</ecNumber>
    </recommendedName>
    <alternativeName>
        <fullName evidence="1">D-fructose-1,6-bisphosphate 1-phosphohydrolase class 1</fullName>
    </alternativeName>
</protein>
<evidence type="ECO:0000255" key="1">
    <source>
        <dbReference type="HAMAP-Rule" id="MF_01855"/>
    </source>
</evidence>
<reference key="1">
    <citation type="submission" date="2006-05" db="EMBL/GenBank/DDBJ databases">
        <title>Complete sequence of chromosome 1 of Burkholderia cenocepacia AU 1054.</title>
        <authorList>
            <consortium name="US DOE Joint Genome Institute"/>
            <person name="Copeland A."/>
            <person name="Lucas S."/>
            <person name="Lapidus A."/>
            <person name="Barry K."/>
            <person name="Detter J.C."/>
            <person name="Glavina del Rio T."/>
            <person name="Hammon N."/>
            <person name="Israni S."/>
            <person name="Dalin E."/>
            <person name="Tice H."/>
            <person name="Pitluck S."/>
            <person name="Chain P."/>
            <person name="Malfatti S."/>
            <person name="Shin M."/>
            <person name="Vergez L."/>
            <person name="Schmutz J."/>
            <person name="Larimer F."/>
            <person name="Land M."/>
            <person name="Hauser L."/>
            <person name="Kyrpides N."/>
            <person name="Lykidis A."/>
            <person name="LiPuma J.J."/>
            <person name="Konstantinidis K."/>
            <person name="Tiedje J.M."/>
            <person name="Richardson P."/>
        </authorList>
    </citation>
    <scope>NUCLEOTIDE SEQUENCE [LARGE SCALE GENOMIC DNA]</scope>
    <source>
        <strain>AU 1054</strain>
    </source>
</reference>
<feature type="chain" id="PRO_0000364486" description="Fructose-1,6-bisphosphatase class 1">
    <location>
        <begin position="1"/>
        <end position="337"/>
    </location>
</feature>
<feature type="binding site" evidence="1">
    <location>
        <position position="94"/>
    </location>
    <ligand>
        <name>Mg(2+)</name>
        <dbReference type="ChEBI" id="CHEBI:18420"/>
        <label>1</label>
    </ligand>
</feature>
<feature type="binding site" evidence="1">
    <location>
        <position position="116"/>
    </location>
    <ligand>
        <name>Mg(2+)</name>
        <dbReference type="ChEBI" id="CHEBI:18420"/>
        <label>1</label>
    </ligand>
</feature>
<feature type="binding site" evidence="1">
    <location>
        <position position="116"/>
    </location>
    <ligand>
        <name>Mg(2+)</name>
        <dbReference type="ChEBI" id="CHEBI:18420"/>
        <label>2</label>
    </ligand>
</feature>
<feature type="binding site" evidence="1">
    <location>
        <position position="118"/>
    </location>
    <ligand>
        <name>Mg(2+)</name>
        <dbReference type="ChEBI" id="CHEBI:18420"/>
        <label>1</label>
    </ligand>
</feature>
<feature type="binding site" evidence="1">
    <location>
        <begin position="119"/>
        <end position="122"/>
    </location>
    <ligand>
        <name>substrate</name>
    </ligand>
</feature>
<feature type="binding site" evidence="1">
    <location>
        <position position="119"/>
    </location>
    <ligand>
        <name>Mg(2+)</name>
        <dbReference type="ChEBI" id="CHEBI:18420"/>
        <label>2</label>
    </ligand>
</feature>
<feature type="binding site" evidence="1">
    <location>
        <position position="210"/>
    </location>
    <ligand>
        <name>substrate</name>
    </ligand>
</feature>
<feature type="binding site" evidence="1">
    <location>
        <position position="276"/>
    </location>
    <ligand>
        <name>substrate</name>
    </ligand>
</feature>
<feature type="binding site" evidence="1">
    <location>
        <position position="282"/>
    </location>
    <ligand>
        <name>Mg(2+)</name>
        <dbReference type="ChEBI" id="CHEBI:18420"/>
        <label>2</label>
    </ligand>
</feature>
<gene>
    <name evidence="1" type="primary">fbp</name>
    <name type="ordered locus">Bcen_0535</name>
</gene>
<accession>Q1BY59</accession>
<dbReference type="EC" id="3.1.3.11" evidence="1"/>
<dbReference type="EMBL" id="CP000378">
    <property type="protein sequence ID" value="ABF75446.1"/>
    <property type="molecule type" value="Genomic_DNA"/>
</dbReference>
<dbReference type="SMR" id="Q1BY59"/>
<dbReference type="HOGENOM" id="CLU_039977_0_0_4"/>
<dbReference type="UniPathway" id="UPA00138"/>
<dbReference type="GO" id="GO:0005829">
    <property type="term" value="C:cytosol"/>
    <property type="evidence" value="ECO:0007669"/>
    <property type="project" value="TreeGrafter"/>
</dbReference>
<dbReference type="GO" id="GO:0042132">
    <property type="term" value="F:fructose 1,6-bisphosphate 1-phosphatase activity"/>
    <property type="evidence" value="ECO:0007669"/>
    <property type="project" value="UniProtKB-UniRule"/>
</dbReference>
<dbReference type="GO" id="GO:0000287">
    <property type="term" value="F:magnesium ion binding"/>
    <property type="evidence" value="ECO:0007669"/>
    <property type="project" value="UniProtKB-UniRule"/>
</dbReference>
<dbReference type="GO" id="GO:0030388">
    <property type="term" value="P:fructose 1,6-bisphosphate metabolic process"/>
    <property type="evidence" value="ECO:0007669"/>
    <property type="project" value="TreeGrafter"/>
</dbReference>
<dbReference type="GO" id="GO:0006002">
    <property type="term" value="P:fructose 6-phosphate metabolic process"/>
    <property type="evidence" value="ECO:0007669"/>
    <property type="project" value="TreeGrafter"/>
</dbReference>
<dbReference type="GO" id="GO:0006000">
    <property type="term" value="P:fructose metabolic process"/>
    <property type="evidence" value="ECO:0007669"/>
    <property type="project" value="TreeGrafter"/>
</dbReference>
<dbReference type="GO" id="GO:0006094">
    <property type="term" value="P:gluconeogenesis"/>
    <property type="evidence" value="ECO:0007669"/>
    <property type="project" value="UniProtKB-UniRule"/>
</dbReference>
<dbReference type="GO" id="GO:0005986">
    <property type="term" value="P:sucrose biosynthetic process"/>
    <property type="evidence" value="ECO:0007669"/>
    <property type="project" value="TreeGrafter"/>
</dbReference>
<dbReference type="CDD" id="cd00354">
    <property type="entry name" value="FBPase"/>
    <property type="match status" value="1"/>
</dbReference>
<dbReference type="FunFam" id="3.30.540.10:FF:000006">
    <property type="entry name" value="Fructose-1,6-bisphosphatase class 1"/>
    <property type="match status" value="1"/>
</dbReference>
<dbReference type="FunFam" id="3.40.190.80:FF:000011">
    <property type="entry name" value="Fructose-1,6-bisphosphatase class 1"/>
    <property type="match status" value="1"/>
</dbReference>
<dbReference type="Gene3D" id="3.40.190.80">
    <property type="match status" value="1"/>
</dbReference>
<dbReference type="Gene3D" id="3.30.540.10">
    <property type="entry name" value="Fructose-1,6-Bisphosphatase, subunit A, domain 1"/>
    <property type="match status" value="1"/>
</dbReference>
<dbReference type="HAMAP" id="MF_01855">
    <property type="entry name" value="FBPase_class1"/>
    <property type="match status" value="1"/>
</dbReference>
<dbReference type="InterPro" id="IPR044015">
    <property type="entry name" value="FBPase_C_dom"/>
</dbReference>
<dbReference type="InterPro" id="IPR000146">
    <property type="entry name" value="FBPase_class-1"/>
</dbReference>
<dbReference type="InterPro" id="IPR033391">
    <property type="entry name" value="FBPase_N"/>
</dbReference>
<dbReference type="InterPro" id="IPR028343">
    <property type="entry name" value="FBPtase"/>
</dbReference>
<dbReference type="NCBIfam" id="NF006778">
    <property type="entry name" value="PRK09293.1-1"/>
    <property type="match status" value="1"/>
</dbReference>
<dbReference type="NCBIfam" id="NF006779">
    <property type="entry name" value="PRK09293.1-3"/>
    <property type="match status" value="1"/>
</dbReference>
<dbReference type="NCBIfam" id="NF006780">
    <property type="entry name" value="PRK09293.1-4"/>
    <property type="match status" value="1"/>
</dbReference>
<dbReference type="PANTHER" id="PTHR11556">
    <property type="entry name" value="FRUCTOSE-1,6-BISPHOSPHATASE-RELATED"/>
    <property type="match status" value="1"/>
</dbReference>
<dbReference type="PANTHER" id="PTHR11556:SF35">
    <property type="entry name" value="SEDOHEPTULOSE-1,7-BISPHOSPHATASE, CHLOROPLASTIC"/>
    <property type="match status" value="1"/>
</dbReference>
<dbReference type="Pfam" id="PF00316">
    <property type="entry name" value="FBPase"/>
    <property type="match status" value="1"/>
</dbReference>
<dbReference type="Pfam" id="PF18913">
    <property type="entry name" value="FBPase_C"/>
    <property type="match status" value="1"/>
</dbReference>
<dbReference type="PIRSF" id="PIRSF500210">
    <property type="entry name" value="FBPtase"/>
    <property type="match status" value="1"/>
</dbReference>
<dbReference type="PIRSF" id="PIRSF000904">
    <property type="entry name" value="FBPtase_SBPase"/>
    <property type="match status" value="1"/>
</dbReference>
<dbReference type="PRINTS" id="PR00115">
    <property type="entry name" value="F16BPHPHTASE"/>
</dbReference>
<dbReference type="SUPFAM" id="SSF56655">
    <property type="entry name" value="Carbohydrate phosphatase"/>
    <property type="match status" value="1"/>
</dbReference>